<accession>C3P3E0</accession>
<sequence length="148" mass="16356">MKVIFLKDVKGKGKKGEVKNVPDGYANNFLLKQGLAAEATNSSMKTLEAQKRKEEKDAAAELESAKQLKETLEKLTVELKAKSGEGGRLFGSITSKQIVDAMQKSHKIKLDKRKFEMDDAIRALGYTNVTVKLHPQVTATVKVHVSEQ</sequence>
<feature type="chain" id="PRO_1000196221" description="Large ribosomal subunit protein bL9">
    <location>
        <begin position="1"/>
        <end position="148"/>
    </location>
</feature>
<organism>
    <name type="scientific">Bacillus anthracis (strain A0248)</name>
    <dbReference type="NCBI Taxonomy" id="592021"/>
    <lineage>
        <taxon>Bacteria</taxon>
        <taxon>Bacillati</taxon>
        <taxon>Bacillota</taxon>
        <taxon>Bacilli</taxon>
        <taxon>Bacillales</taxon>
        <taxon>Bacillaceae</taxon>
        <taxon>Bacillus</taxon>
        <taxon>Bacillus cereus group</taxon>
    </lineage>
</organism>
<dbReference type="EMBL" id="CP001598">
    <property type="protein sequence ID" value="ACQ47194.1"/>
    <property type="molecule type" value="Genomic_DNA"/>
</dbReference>
<dbReference type="RefSeq" id="WP_000864235.1">
    <property type="nucleotide sequence ID" value="NC_012659.1"/>
</dbReference>
<dbReference type="SMR" id="C3P3E0"/>
<dbReference type="GeneID" id="83639160"/>
<dbReference type="KEGG" id="bai:BAA_5753"/>
<dbReference type="HOGENOM" id="CLU_078938_3_2_9"/>
<dbReference type="GO" id="GO:1990904">
    <property type="term" value="C:ribonucleoprotein complex"/>
    <property type="evidence" value="ECO:0007669"/>
    <property type="project" value="UniProtKB-KW"/>
</dbReference>
<dbReference type="GO" id="GO:0005840">
    <property type="term" value="C:ribosome"/>
    <property type="evidence" value="ECO:0007669"/>
    <property type="project" value="UniProtKB-KW"/>
</dbReference>
<dbReference type="GO" id="GO:0019843">
    <property type="term" value="F:rRNA binding"/>
    <property type="evidence" value="ECO:0007669"/>
    <property type="project" value="UniProtKB-UniRule"/>
</dbReference>
<dbReference type="GO" id="GO:0003735">
    <property type="term" value="F:structural constituent of ribosome"/>
    <property type="evidence" value="ECO:0007669"/>
    <property type="project" value="InterPro"/>
</dbReference>
<dbReference type="GO" id="GO:0006412">
    <property type="term" value="P:translation"/>
    <property type="evidence" value="ECO:0007669"/>
    <property type="project" value="UniProtKB-UniRule"/>
</dbReference>
<dbReference type="FunFam" id="3.10.430.100:FF:000002">
    <property type="entry name" value="50S ribosomal protein L9"/>
    <property type="match status" value="1"/>
</dbReference>
<dbReference type="FunFam" id="3.40.5.10:FF:000002">
    <property type="entry name" value="50S ribosomal protein L9"/>
    <property type="match status" value="1"/>
</dbReference>
<dbReference type="Gene3D" id="3.10.430.100">
    <property type="entry name" value="Ribosomal protein L9, C-terminal domain"/>
    <property type="match status" value="1"/>
</dbReference>
<dbReference type="Gene3D" id="3.40.5.10">
    <property type="entry name" value="Ribosomal protein L9, N-terminal domain"/>
    <property type="match status" value="1"/>
</dbReference>
<dbReference type="HAMAP" id="MF_00503">
    <property type="entry name" value="Ribosomal_bL9"/>
    <property type="match status" value="1"/>
</dbReference>
<dbReference type="InterPro" id="IPR000244">
    <property type="entry name" value="Ribosomal_bL9"/>
</dbReference>
<dbReference type="InterPro" id="IPR009027">
    <property type="entry name" value="Ribosomal_bL9/RNase_H1_N"/>
</dbReference>
<dbReference type="InterPro" id="IPR020594">
    <property type="entry name" value="Ribosomal_bL9_bac/chp"/>
</dbReference>
<dbReference type="InterPro" id="IPR020069">
    <property type="entry name" value="Ribosomal_bL9_C"/>
</dbReference>
<dbReference type="InterPro" id="IPR036791">
    <property type="entry name" value="Ribosomal_bL9_C_sf"/>
</dbReference>
<dbReference type="InterPro" id="IPR020070">
    <property type="entry name" value="Ribosomal_bL9_N"/>
</dbReference>
<dbReference type="InterPro" id="IPR036935">
    <property type="entry name" value="Ribosomal_bL9_N_sf"/>
</dbReference>
<dbReference type="NCBIfam" id="TIGR00158">
    <property type="entry name" value="L9"/>
    <property type="match status" value="1"/>
</dbReference>
<dbReference type="PANTHER" id="PTHR21368">
    <property type="entry name" value="50S RIBOSOMAL PROTEIN L9"/>
    <property type="match status" value="1"/>
</dbReference>
<dbReference type="Pfam" id="PF03948">
    <property type="entry name" value="Ribosomal_L9_C"/>
    <property type="match status" value="1"/>
</dbReference>
<dbReference type="Pfam" id="PF01281">
    <property type="entry name" value="Ribosomal_L9_N"/>
    <property type="match status" value="1"/>
</dbReference>
<dbReference type="SUPFAM" id="SSF55658">
    <property type="entry name" value="L9 N-domain-like"/>
    <property type="match status" value="1"/>
</dbReference>
<dbReference type="SUPFAM" id="SSF55653">
    <property type="entry name" value="Ribosomal protein L9 C-domain"/>
    <property type="match status" value="1"/>
</dbReference>
<dbReference type="PROSITE" id="PS00651">
    <property type="entry name" value="RIBOSOMAL_L9"/>
    <property type="match status" value="1"/>
</dbReference>
<gene>
    <name evidence="1" type="primary">rplI</name>
    <name type="ordered locus">BAA_5753</name>
</gene>
<protein>
    <recommendedName>
        <fullName evidence="1">Large ribosomal subunit protein bL9</fullName>
    </recommendedName>
    <alternativeName>
        <fullName evidence="2">50S ribosomal protein L9</fullName>
    </alternativeName>
</protein>
<name>RL9_BACAA</name>
<evidence type="ECO:0000255" key="1">
    <source>
        <dbReference type="HAMAP-Rule" id="MF_00503"/>
    </source>
</evidence>
<evidence type="ECO:0000305" key="2"/>
<reference key="1">
    <citation type="submission" date="2009-04" db="EMBL/GenBank/DDBJ databases">
        <title>Genome sequence of Bacillus anthracis A0248.</title>
        <authorList>
            <person name="Dodson R.J."/>
            <person name="Munk A.C."/>
            <person name="Bruce D."/>
            <person name="Detter C."/>
            <person name="Tapia R."/>
            <person name="Sutton G."/>
            <person name="Sims D."/>
            <person name="Brettin T."/>
        </authorList>
    </citation>
    <scope>NUCLEOTIDE SEQUENCE [LARGE SCALE GENOMIC DNA]</scope>
    <source>
        <strain>A0248</strain>
    </source>
</reference>
<comment type="function">
    <text evidence="1">Binds to the 23S rRNA.</text>
</comment>
<comment type="similarity">
    <text evidence="1">Belongs to the bacterial ribosomal protein bL9 family.</text>
</comment>
<proteinExistence type="inferred from homology"/>
<keyword id="KW-0687">Ribonucleoprotein</keyword>
<keyword id="KW-0689">Ribosomal protein</keyword>
<keyword id="KW-0694">RNA-binding</keyword>
<keyword id="KW-0699">rRNA-binding</keyword>